<protein>
    <recommendedName>
        <fullName evidence="7">Highly reducing polyketide synthase Dhc3</fullName>
        <ecNumber evidence="6">2.3.1.-</ecNumber>
    </recommendedName>
    <alternativeName>
        <fullName evidence="7">Dehydrocurvularin biosynthesis protein 3</fullName>
    </alternativeName>
</protein>
<sequence length="2389" mass="260632">MPSATPSLDVPIAVVGLACRFPGDASSPSKFWDMVKNGRDAYSPTSSRWNSDAFYHPVNGKLNSLPTKGGHFLKEDPYVFDASFFNITAAEAIALDPKQRMALEVAYEAFENANMPLQQISGTQTACYIGSGPSDYRGSVERDFLHNPKYHLLGTGDEMISNRISHFFDIHGPSATIQTACSSSLMATHLACQSLKSGESDMAVTGGVSLMLTPDFTTHLNNLTFLNPQGRSKAFGESAGGYGRGEGCGIIILKRLDRAIQDGDSIRAVIRATGANSDGFTQGITMPSYEAQAALIKYVYESHGLDYDSTQYVEAHGTGTKVGDPIEMKAIYNTIGKGSSKPRKLYVGSVKPNIGHLESAAGVSGIIKGILAMEHNLIPPNIHFTKGNPNIPFHEWNVAVPLKPTAWPVSQTKRMSVSGFGMGGTNGHAVLESFNPSRLADAAVKHGDLTRFQKVRNKKRLFVFSSHDQAGFKRNADALVHHIENLGSAASSSEFLANLAHTLSGAKSSLSWRATCLAENTTEICDYLSNKPGDGAFRATSIENTTPRIGFVFTGQGAQWARMGVEMLDRQVFRDSIEQSATYLRDMGCLWDPIAELEKAQAESRLSYPEISQPICSVLQIALVDELQSWGVVPSRVVGHSSGEIAAAYSIGALSHRDAVAAAYFRGIAATKLQTDAPDLKGGMMAVGCSRDEADDVIEQSNLSGTAVVACVNSPSSVTLSGDVDSLEQLRAIFDDRKIFARRLKVEMAYHSRHMNRVFGTYSASIADLEPITQEETNEDGDFQIQTMVSSVTGQEVASELLGPYYWVRNLISPVLFSDAVKELVSPDDYDENKGSSSAVDLLIEIGPHSALSGPVEQILNHHGIRNVGYKSMLIRGRNAVETSLELASELYLDGIPLDISKVNGDLKVRRLTDLPPYQWNHSKVFRHENRIQTELMTRRFPSRSLIGAQVPMMDESQHVWRNFLRLADEPWLRGHKIGSTVLFPAAGLVSMAIEAARQLVEPGKTARSLRFREVSFSAAMALSEDVATEVILHMRPHLIATSGSTPSSWWELTISSCVGTSQLRDNCRGLITIDYADTTSEQMAKENANFENFMISEYYRVHNGCPDICSKEDFYGQFEKITWSYGEAFQGVENVHPGDGESTYDVRLVDIGETFSKDQSDRPFLIHAGTLDSILQGCLGSTYKNGRFETSKPVLPTFIGEMEISLDIPGDVGYVMPGLCESKRHGFKELSSNINIFDTGLSKVILSVVGYRVSELENDTEAQDTQQLEVDPADITSVVRWNCSVAIATQEELQKLMLASAPEARVLELVLLHIHNNPSATVIELTREIEPTNHTVMSQLPNGTVQSNQLHYAAISVETPLEGSTFNALSSVNSFYLGESDDSSRRGVTTADLLIVPQAVSDCENIENLLDRLITLGKPDAALILESQKSFDQLASILKTKGFQCVLEVQRSIALFKRQISQPTNGLPNCTSATRDFTIVDSLAPTEDTNAFSHNLRATLANQGYTVCVATWTEISACTETELEGKTIISLMELNKPMLSSLSESDFHDFRKLVLSSERLLWVNAGDDPSMGMIDGIRRTMRSEVAGIKFQVLRLSSLKTALQCGPSLVSRILTTESQDDEYRERNGMLEVARIYNNPEINADVRHCLTDSFRVQRLADQVKPLRLTIGKPGLLDTLAFIEDDRMKTALGETEIQVDIKATGINFKDIMAAMGLVGVSLIGQEASGIVTATGSAAASRFKPGDRVTLLWEGMHATKLQLDHRLAVHIPDSMSFEEASALPMVHVTAYHALINIAKLRRGQSILVHAAAGGVGQAALQLATYLGLTVYATVGSDDKRSLLMTKYNIPDAHIFCSRDASFLKAIKRVTGGHGVDCVLNSLSGELLRVSWACLAPFGTFVEIGLRDITNNMRLDMRPFSQSTTFAFINIANFFCAESLDALGNIISDTFDLVHQGVLRSPYPLTVYPVSELGTAFRTMQQGKHRGKLVLSFEGNAQVPVLCKAKDALHLKPDATYLFVGGLGGLGRSLAQEFIACGARHIAFVSRSGDTSKKAKATVDHLTALGAVVKAYQADIANEDAFLSAMQQCAADLPPIAGVLQMAMLLRDTLFEKMSYEDWTGPTRPKIQGTLSLHRYFSATRPLDFFLICSSISGIFGYAGQTAYAAANTFQDALAQHRRNQGLKAVAVDLGIMRDVGILAEQGTTGKLALWEAVLGIREKAFHALMKSIINRECKGEACPAQICTGLGTADVMKKFGLERPEHFADPRFGPLDVLNIDATSSPNADDSAVVSSPSTRLASASTFQEAVSIITDALVHKTAEILLMPVSEVDPSRPMYRYGVDSLVALEVRNWIARELQANMALLEILTAVPMREFAEKIAEKSKLVTMGNGER</sequence>
<comment type="function">
    <text evidence="6">Highly reducing polyketide synthase; part of the gene cluster that mediates the biosynthesis of 10,11-dehydrocurvularin, a prevalent fungal phytotoxin with heat shock response and immune-modulatory activities (PubMed:26493380). The highly reducing polyketide synthase Dhc3 is responsible for biosynthesis up to the tetraketide stage (PubMed:26493380). The non-reducing polyketide synthase Dhc5 then conducts four additional chain extension cycles, producing the unreduced part of the nascent octaketide from C-1 to C-8 in 10,11-dehydrocurvularin (PubMed:26493380).</text>
</comment>
<comment type="pathway">
    <text evidence="8">Mycotoxin biosynthesis.</text>
</comment>
<dbReference type="EC" id="2.3.1.-" evidence="6"/>
<dbReference type="EMBL" id="KT271472">
    <property type="protein sequence ID" value="AKQ49201.1"/>
    <property type="molecule type" value="mRNA"/>
</dbReference>
<dbReference type="SMR" id="A0A0N7D4P6"/>
<dbReference type="GO" id="GO:0004312">
    <property type="term" value="F:fatty acid synthase activity"/>
    <property type="evidence" value="ECO:0007669"/>
    <property type="project" value="TreeGrafter"/>
</dbReference>
<dbReference type="GO" id="GO:0016491">
    <property type="term" value="F:oxidoreductase activity"/>
    <property type="evidence" value="ECO:0007669"/>
    <property type="project" value="UniProtKB-KW"/>
</dbReference>
<dbReference type="GO" id="GO:0031177">
    <property type="term" value="F:phosphopantetheine binding"/>
    <property type="evidence" value="ECO:0007669"/>
    <property type="project" value="InterPro"/>
</dbReference>
<dbReference type="GO" id="GO:0006633">
    <property type="term" value="P:fatty acid biosynthetic process"/>
    <property type="evidence" value="ECO:0007669"/>
    <property type="project" value="TreeGrafter"/>
</dbReference>
<dbReference type="GO" id="GO:0030639">
    <property type="term" value="P:polyketide biosynthetic process"/>
    <property type="evidence" value="ECO:0007669"/>
    <property type="project" value="UniProtKB-ARBA"/>
</dbReference>
<dbReference type="CDD" id="cd05195">
    <property type="entry name" value="enoyl_red"/>
    <property type="match status" value="1"/>
</dbReference>
<dbReference type="CDD" id="cd05274">
    <property type="entry name" value="KR_FAS_SDR_x"/>
    <property type="match status" value="1"/>
</dbReference>
<dbReference type="CDD" id="cd00833">
    <property type="entry name" value="PKS"/>
    <property type="match status" value="1"/>
</dbReference>
<dbReference type="FunFam" id="3.40.50.720:FF:000209">
    <property type="entry name" value="Polyketide synthase Pks12"/>
    <property type="match status" value="1"/>
</dbReference>
<dbReference type="Gene3D" id="3.40.47.10">
    <property type="match status" value="1"/>
</dbReference>
<dbReference type="Gene3D" id="1.10.1200.10">
    <property type="entry name" value="ACP-like"/>
    <property type="match status" value="1"/>
</dbReference>
<dbReference type="Gene3D" id="3.40.366.10">
    <property type="entry name" value="Malonyl-Coenzyme A Acyl Carrier Protein, domain 2"/>
    <property type="match status" value="1"/>
</dbReference>
<dbReference type="Gene3D" id="3.90.180.10">
    <property type="entry name" value="Medium-chain alcohol dehydrogenases, catalytic domain"/>
    <property type="match status" value="1"/>
</dbReference>
<dbReference type="Gene3D" id="3.40.50.720">
    <property type="entry name" value="NAD(P)-binding Rossmann-like Domain"/>
    <property type="match status" value="1"/>
</dbReference>
<dbReference type="Gene3D" id="3.10.129.110">
    <property type="entry name" value="Polyketide synthase dehydratase"/>
    <property type="match status" value="1"/>
</dbReference>
<dbReference type="InterPro" id="IPR001227">
    <property type="entry name" value="Ac_transferase_dom_sf"/>
</dbReference>
<dbReference type="InterPro" id="IPR036736">
    <property type="entry name" value="ACP-like_sf"/>
</dbReference>
<dbReference type="InterPro" id="IPR014043">
    <property type="entry name" value="Acyl_transferase_dom"/>
</dbReference>
<dbReference type="InterPro" id="IPR016035">
    <property type="entry name" value="Acyl_Trfase/lysoPLipase"/>
</dbReference>
<dbReference type="InterPro" id="IPR013154">
    <property type="entry name" value="ADH-like_N"/>
</dbReference>
<dbReference type="InterPro" id="IPR011032">
    <property type="entry name" value="GroES-like_sf"/>
</dbReference>
<dbReference type="InterPro" id="IPR014031">
    <property type="entry name" value="Ketoacyl_synth_C"/>
</dbReference>
<dbReference type="InterPro" id="IPR014030">
    <property type="entry name" value="Ketoacyl_synth_N"/>
</dbReference>
<dbReference type="InterPro" id="IPR016036">
    <property type="entry name" value="Malonyl_transacylase_ACP-bd"/>
</dbReference>
<dbReference type="InterPro" id="IPR036291">
    <property type="entry name" value="NAD(P)-bd_dom_sf"/>
</dbReference>
<dbReference type="InterPro" id="IPR056501">
    <property type="entry name" value="NAD-bd_HRPKS_sdrA"/>
</dbReference>
<dbReference type="InterPro" id="IPR032821">
    <property type="entry name" value="PKS_assoc"/>
</dbReference>
<dbReference type="InterPro" id="IPR020841">
    <property type="entry name" value="PKS_Beta-ketoAc_synthase_dom"/>
</dbReference>
<dbReference type="InterPro" id="IPR042104">
    <property type="entry name" value="PKS_dehydratase_sf"/>
</dbReference>
<dbReference type="InterPro" id="IPR020807">
    <property type="entry name" value="PKS_DH"/>
</dbReference>
<dbReference type="InterPro" id="IPR049551">
    <property type="entry name" value="PKS_DH_C"/>
</dbReference>
<dbReference type="InterPro" id="IPR049552">
    <property type="entry name" value="PKS_DH_N"/>
</dbReference>
<dbReference type="InterPro" id="IPR020843">
    <property type="entry name" value="PKS_ER"/>
</dbReference>
<dbReference type="InterPro" id="IPR013968">
    <property type="entry name" value="PKS_KR"/>
</dbReference>
<dbReference type="InterPro" id="IPR049900">
    <property type="entry name" value="PKS_mFAS_DH"/>
</dbReference>
<dbReference type="InterPro" id="IPR050091">
    <property type="entry name" value="PKS_NRPS_Biosynth_Enz"/>
</dbReference>
<dbReference type="InterPro" id="IPR020806">
    <property type="entry name" value="PKS_PP-bd"/>
</dbReference>
<dbReference type="InterPro" id="IPR009081">
    <property type="entry name" value="PP-bd_ACP"/>
</dbReference>
<dbReference type="InterPro" id="IPR006162">
    <property type="entry name" value="Ppantetheine_attach_site"/>
</dbReference>
<dbReference type="InterPro" id="IPR016039">
    <property type="entry name" value="Thiolase-like"/>
</dbReference>
<dbReference type="PANTHER" id="PTHR43775:SF29">
    <property type="entry name" value="ASPERFURANONE POLYKETIDE SYNTHASE AFOG-RELATED"/>
    <property type="match status" value="1"/>
</dbReference>
<dbReference type="PANTHER" id="PTHR43775">
    <property type="entry name" value="FATTY ACID SYNTHASE"/>
    <property type="match status" value="1"/>
</dbReference>
<dbReference type="Pfam" id="PF23297">
    <property type="entry name" value="ACP_SdgA_C"/>
    <property type="match status" value="1"/>
</dbReference>
<dbReference type="Pfam" id="PF00698">
    <property type="entry name" value="Acyl_transf_1"/>
    <property type="match status" value="1"/>
</dbReference>
<dbReference type="Pfam" id="PF08240">
    <property type="entry name" value="ADH_N"/>
    <property type="match status" value="1"/>
</dbReference>
<dbReference type="Pfam" id="PF13602">
    <property type="entry name" value="ADH_zinc_N_2"/>
    <property type="match status" value="1"/>
</dbReference>
<dbReference type="Pfam" id="PF16197">
    <property type="entry name" value="KAsynt_C_assoc"/>
    <property type="match status" value="1"/>
</dbReference>
<dbReference type="Pfam" id="PF00109">
    <property type="entry name" value="ketoacyl-synt"/>
    <property type="match status" value="1"/>
</dbReference>
<dbReference type="Pfam" id="PF02801">
    <property type="entry name" value="Ketoacyl-synt_C"/>
    <property type="match status" value="1"/>
</dbReference>
<dbReference type="Pfam" id="PF08659">
    <property type="entry name" value="KR"/>
    <property type="match status" value="1"/>
</dbReference>
<dbReference type="Pfam" id="PF23114">
    <property type="entry name" value="NAD-bd_HRPKS_sdrA"/>
    <property type="match status" value="1"/>
</dbReference>
<dbReference type="Pfam" id="PF21089">
    <property type="entry name" value="PKS_DH_N"/>
    <property type="match status" value="1"/>
</dbReference>
<dbReference type="Pfam" id="PF14765">
    <property type="entry name" value="PS-DH"/>
    <property type="match status" value="1"/>
</dbReference>
<dbReference type="SMART" id="SM00827">
    <property type="entry name" value="PKS_AT"/>
    <property type="match status" value="1"/>
</dbReference>
<dbReference type="SMART" id="SM00826">
    <property type="entry name" value="PKS_DH"/>
    <property type="match status" value="1"/>
</dbReference>
<dbReference type="SMART" id="SM00829">
    <property type="entry name" value="PKS_ER"/>
    <property type="match status" value="1"/>
</dbReference>
<dbReference type="SMART" id="SM00822">
    <property type="entry name" value="PKS_KR"/>
    <property type="match status" value="1"/>
</dbReference>
<dbReference type="SMART" id="SM00825">
    <property type="entry name" value="PKS_KS"/>
    <property type="match status" value="1"/>
</dbReference>
<dbReference type="SMART" id="SM00823">
    <property type="entry name" value="PKS_PP"/>
    <property type="match status" value="1"/>
</dbReference>
<dbReference type="SUPFAM" id="SSF47336">
    <property type="entry name" value="ACP-like"/>
    <property type="match status" value="1"/>
</dbReference>
<dbReference type="SUPFAM" id="SSF52151">
    <property type="entry name" value="FabD/lysophospholipase-like"/>
    <property type="match status" value="1"/>
</dbReference>
<dbReference type="SUPFAM" id="SSF50129">
    <property type="entry name" value="GroES-like"/>
    <property type="match status" value="1"/>
</dbReference>
<dbReference type="SUPFAM" id="SSF51735">
    <property type="entry name" value="NAD(P)-binding Rossmann-fold domains"/>
    <property type="match status" value="2"/>
</dbReference>
<dbReference type="SUPFAM" id="SSF55048">
    <property type="entry name" value="Probable ACP-binding domain of malonyl-CoA ACP transacylase"/>
    <property type="match status" value="1"/>
</dbReference>
<dbReference type="SUPFAM" id="SSF53901">
    <property type="entry name" value="Thiolase-like"/>
    <property type="match status" value="1"/>
</dbReference>
<dbReference type="PROSITE" id="PS50075">
    <property type="entry name" value="CARRIER"/>
    <property type="match status" value="1"/>
</dbReference>
<dbReference type="PROSITE" id="PS52004">
    <property type="entry name" value="KS3_2"/>
    <property type="match status" value="1"/>
</dbReference>
<dbReference type="PROSITE" id="PS00012">
    <property type="entry name" value="PHOSPHOPANTETHEINE"/>
    <property type="match status" value="1"/>
</dbReference>
<dbReference type="PROSITE" id="PS52019">
    <property type="entry name" value="PKS_MFAS_DH"/>
    <property type="match status" value="1"/>
</dbReference>
<evidence type="ECO:0000255" key="1"/>
<evidence type="ECO:0000255" key="2">
    <source>
        <dbReference type="PROSITE-ProRule" id="PRU00258"/>
    </source>
</evidence>
<evidence type="ECO:0000255" key="3">
    <source>
        <dbReference type="PROSITE-ProRule" id="PRU01348"/>
    </source>
</evidence>
<evidence type="ECO:0000255" key="4">
    <source>
        <dbReference type="PROSITE-ProRule" id="PRU01363"/>
    </source>
</evidence>
<evidence type="ECO:0000255" key="5">
    <source>
        <dbReference type="PROSITE-ProRule" id="PRU10022"/>
    </source>
</evidence>
<evidence type="ECO:0000269" key="6">
    <source>
    </source>
</evidence>
<evidence type="ECO:0000303" key="7">
    <source>
    </source>
</evidence>
<evidence type="ECO:0000305" key="8">
    <source>
    </source>
</evidence>
<reference key="1">
    <citation type="journal article" date="2015" name="ChemBioChem">
        <title>Comparison of 10,11-dehydrocurvularin polyketide synthases from Alternaria cinerariae and Aspergillus terreus highlights key structural motifs.</title>
        <authorList>
            <person name="Cochrane R.V."/>
            <person name="Gao Z."/>
            <person name="Lambkin G.R."/>
            <person name="Xu W."/>
            <person name="Winter J.M."/>
            <person name="Marcus S.L."/>
            <person name="Tang Y."/>
            <person name="Vederas J.C."/>
        </authorList>
    </citation>
    <scope>NUCLEOTIDE SEQUENCE [MRNA]</scope>
    <scope>DOMAIN</scope>
    <scope>FUNCTION</scope>
    <scope>PATHWAY</scope>
    <source>
        <strain>ATCC 11784</strain>
    </source>
</reference>
<reference key="2">
    <citation type="submission" date="2015-07" db="EMBL/GenBank/DDBJ databases">
        <authorList>
            <person name="Cajimat M.N.B."/>
            <person name="Milazzo M.L."/>
            <person name="Fulhorst C.F."/>
        </authorList>
    </citation>
    <scope>NUCLEOTIDE SEQUENCE [MRNA]</scope>
    <source>
        <strain>ATCC 11784</strain>
    </source>
</reference>
<organism>
    <name type="scientific">Alternaria cinerariae</name>
    <dbReference type="NCBI Taxonomy" id="216837"/>
    <lineage>
        <taxon>Eukaryota</taxon>
        <taxon>Fungi</taxon>
        <taxon>Dikarya</taxon>
        <taxon>Ascomycota</taxon>
        <taxon>Pezizomycotina</taxon>
        <taxon>Dothideomycetes</taxon>
        <taxon>Pleosporomycetidae</taxon>
        <taxon>Pleosporales</taxon>
        <taxon>Pleosporineae</taxon>
        <taxon>Pleosporaceae</taxon>
        <taxon>Alternaria</taxon>
        <taxon>Alternaria sect. Sonchi</taxon>
    </lineage>
</organism>
<proteinExistence type="evidence at transcript level"/>
<gene>
    <name type="primary">Dhc3</name>
</gene>
<accession>A0A0N7D4P6</accession>
<name>DHC3_ALTCI</name>
<feature type="chain" id="PRO_0000438389" description="Highly reducing polyketide synthase Dhc3">
    <location>
        <begin position="1"/>
        <end position="2389"/>
    </location>
</feature>
<feature type="domain" description="Ketosynthase family 3 (KS3)" evidence="3 8">
    <location>
        <begin position="9"/>
        <end position="433"/>
    </location>
</feature>
<feature type="domain" description="PKS/mFAS DH" evidence="4">
    <location>
        <begin position="944"/>
        <end position="1263"/>
    </location>
</feature>
<feature type="domain" description="Carrier" evidence="2">
    <location>
        <begin position="2302"/>
        <end position="2379"/>
    </location>
</feature>
<feature type="region of interest" description="Malonyl-CoA:ACP transacylase (MAT) domain" evidence="1 8">
    <location>
        <begin position="551"/>
        <end position="861"/>
    </location>
</feature>
<feature type="region of interest" description="N-terminal hotdog fold" evidence="4">
    <location>
        <begin position="944"/>
        <end position="1079"/>
    </location>
</feature>
<feature type="region of interest" description="Dehydratase (DH) domain" evidence="1 8">
    <location>
        <begin position="946"/>
        <end position="1262"/>
    </location>
</feature>
<feature type="region of interest" description="C-terminal hotdog fold" evidence="4">
    <location>
        <begin position="1107"/>
        <end position="1263"/>
    </location>
</feature>
<feature type="region of interest" description="Enoylreductase (ER) domain" evidence="1 8">
    <location>
        <begin position="1673"/>
        <end position="1987"/>
    </location>
</feature>
<feature type="region of interest" description="Catalytic ketoreductase (KRc) domain" evidence="1 8">
    <location>
        <begin position="2011"/>
        <end position="2191"/>
    </location>
</feature>
<feature type="active site" description="For beta-ketoacyl synthase activity" evidence="3">
    <location>
        <position position="181"/>
    </location>
</feature>
<feature type="active site" description="For beta-ketoacyl synthase activity" evidence="3">
    <location>
        <position position="316"/>
    </location>
</feature>
<feature type="active site" description="For beta-ketoacyl synthase activity" evidence="3">
    <location>
        <position position="356"/>
    </location>
</feature>
<feature type="active site" description="For malonyltransferase activity" evidence="5">
    <location>
        <position position="641"/>
    </location>
</feature>
<feature type="active site" description="Proton acceptor; for dehydratase activity" evidence="4">
    <location>
        <position position="976"/>
    </location>
</feature>
<feature type="active site" description="Proton donor; for dehydratase activity" evidence="4">
    <location>
        <position position="1173"/>
    </location>
</feature>
<feature type="modified residue" description="O-(pantetheine 4'-phosphoryl)serine" evidence="2">
    <location>
        <position position="2339"/>
    </location>
</feature>
<keyword id="KW-0511">Multifunctional enzyme</keyword>
<keyword id="KW-0560">Oxidoreductase</keyword>
<keyword id="KW-0596">Phosphopantetheine</keyword>
<keyword id="KW-0597">Phosphoprotein</keyword>
<keyword id="KW-0808">Transferase</keyword>